<organism>
    <name type="scientific">Dechloromonas aromatica (strain RCB)</name>
    <dbReference type="NCBI Taxonomy" id="159087"/>
    <lineage>
        <taxon>Bacteria</taxon>
        <taxon>Pseudomonadati</taxon>
        <taxon>Pseudomonadota</taxon>
        <taxon>Betaproteobacteria</taxon>
        <taxon>Rhodocyclales</taxon>
        <taxon>Azonexaceae</taxon>
        <taxon>Dechloromonas</taxon>
    </lineage>
</organism>
<comment type="function">
    <text evidence="1">Catalyzes the formation of 4-diphosphocytidyl-2-C-methyl-D-erythritol from CTP and 2-C-methyl-D-erythritol 4-phosphate (MEP).</text>
</comment>
<comment type="catalytic activity">
    <reaction evidence="1">
        <text>2-C-methyl-D-erythritol 4-phosphate + CTP + H(+) = 4-CDP-2-C-methyl-D-erythritol + diphosphate</text>
        <dbReference type="Rhea" id="RHEA:13429"/>
        <dbReference type="ChEBI" id="CHEBI:15378"/>
        <dbReference type="ChEBI" id="CHEBI:33019"/>
        <dbReference type="ChEBI" id="CHEBI:37563"/>
        <dbReference type="ChEBI" id="CHEBI:57823"/>
        <dbReference type="ChEBI" id="CHEBI:58262"/>
        <dbReference type="EC" id="2.7.7.60"/>
    </reaction>
</comment>
<comment type="pathway">
    <text evidence="1">Isoprenoid biosynthesis; isopentenyl diphosphate biosynthesis via DXP pathway; isopentenyl diphosphate from 1-deoxy-D-xylulose 5-phosphate: step 2/6.</text>
</comment>
<comment type="similarity">
    <text evidence="1">Belongs to the IspD/TarI cytidylyltransferase family. IspD subfamily.</text>
</comment>
<reference key="1">
    <citation type="journal article" date="2009" name="BMC Genomics">
        <title>Metabolic analysis of the soil microbe Dechloromonas aromatica str. RCB: indications of a surprisingly complex life-style and cryptic anaerobic pathways for aromatic degradation.</title>
        <authorList>
            <person name="Salinero K.K."/>
            <person name="Keller K."/>
            <person name="Feil W.S."/>
            <person name="Feil H."/>
            <person name="Trong S."/>
            <person name="Di Bartolo G."/>
            <person name="Lapidus A."/>
        </authorList>
    </citation>
    <scope>NUCLEOTIDE SEQUENCE [LARGE SCALE GENOMIC DNA]</scope>
    <source>
        <strain>RCB</strain>
    </source>
</reference>
<evidence type="ECO:0000255" key="1">
    <source>
        <dbReference type="HAMAP-Rule" id="MF_00108"/>
    </source>
</evidence>
<name>ISPD_DECAR</name>
<keyword id="KW-0414">Isoprene biosynthesis</keyword>
<keyword id="KW-0548">Nucleotidyltransferase</keyword>
<keyword id="KW-0808">Transferase</keyword>
<accession>Q47EL2</accession>
<protein>
    <recommendedName>
        <fullName evidence="1">2-C-methyl-D-erythritol 4-phosphate cytidylyltransferase</fullName>
        <ecNumber evidence="1">2.7.7.60</ecNumber>
    </recommendedName>
    <alternativeName>
        <fullName evidence="1">4-diphosphocytidyl-2C-methyl-D-erythritol synthase</fullName>
    </alternativeName>
    <alternativeName>
        <fullName evidence="1">MEP cytidylyltransferase</fullName>
        <shortName evidence="1">MCT</shortName>
    </alternativeName>
</protein>
<feature type="chain" id="PRO_0000237786" description="2-C-methyl-D-erythritol 4-phosphate cytidylyltransferase">
    <location>
        <begin position="1"/>
        <end position="228"/>
    </location>
</feature>
<feature type="site" description="Transition state stabilizer" evidence="1">
    <location>
        <position position="16"/>
    </location>
</feature>
<feature type="site" description="Transition state stabilizer" evidence="1">
    <location>
        <position position="23"/>
    </location>
</feature>
<feature type="site" description="Positions MEP for the nucleophilic attack" evidence="1">
    <location>
        <position position="158"/>
    </location>
</feature>
<feature type="site" description="Positions MEP for the nucleophilic attack" evidence="1">
    <location>
        <position position="210"/>
    </location>
</feature>
<gene>
    <name evidence="1" type="primary">ispD</name>
    <name type="ordered locus">Daro_1973</name>
</gene>
<sequence length="228" mass="24573">MPRHYAIVPAAGSGSRFGAEKPKQYLDLLGRPLIFHTLAALTASPDIERVWVVLAPDDPWWPRYDWSELGSKLETVRCGGATRAESVSNGLRAAAMVAADDDWVLVHDAARPCLSAAMLDALFAELASDPVGGILAVPVADTLKRADAEQRVGATEPRDGLWQAQTPQMFRYGLLGEALEKCRDVTDEAGAIEAVGLKPKLVRGDSTNLKVTYPADLALAAMILRARK</sequence>
<dbReference type="EC" id="2.7.7.60" evidence="1"/>
<dbReference type="EMBL" id="CP000089">
    <property type="protein sequence ID" value="AAZ46719.1"/>
    <property type="molecule type" value="Genomic_DNA"/>
</dbReference>
<dbReference type="SMR" id="Q47EL2"/>
<dbReference type="STRING" id="159087.Daro_1973"/>
<dbReference type="KEGG" id="dar:Daro_1973"/>
<dbReference type="eggNOG" id="COG1211">
    <property type="taxonomic scope" value="Bacteria"/>
</dbReference>
<dbReference type="HOGENOM" id="CLU_061281_3_0_4"/>
<dbReference type="OrthoDB" id="9806837at2"/>
<dbReference type="UniPathway" id="UPA00056">
    <property type="reaction ID" value="UER00093"/>
</dbReference>
<dbReference type="GO" id="GO:0050518">
    <property type="term" value="F:2-C-methyl-D-erythritol 4-phosphate cytidylyltransferase activity"/>
    <property type="evidence" value="ECO:0007669"/>
    <property type="project" value="UniProtKB-UniRule"/>
</dbReference>
<dbReference type="GO" id="GO:0019288">
    <property type="term" value="P:isopentenyl diphosphate biosynthetic process, methylerythritol 4-phosphate pathway"/>
    <property type="evidence" value="ECO:0007669"/>
    <property type="project" value="UniProtKB-UniRule"/>
</dbReference>
<dbReference type="CDD" id="cd02516">
    <property type="entry name" value="CDP-ME_synthetase"/>
    <property type="match status" value="1"/>
</dbReference>
<dbReference type="FunFam" id="3.90.550.10:FF:000003">
    <property type="entry name" value="2-C-methyl-D-erythritol 4-phosphate cytidylyltransferase"/>
    <property type="match status" value="1"/>
</dbReference>
<dbReference type="Gene3D" id="3.90.550.10">
    <property type="entry name" value="Spore Coat Polysaccharide Biosynthesis Protein SpsA, Chain A"/>
    <property type="match status" value="1"/>
</dbReference>
<dbReference type="HAMAP" id="MF_00108">
    <property type="entry name" value="IspD"/>
    <property type="match status" value="1"/>
</dbReference>
<dbReference type="InterPro" id="IPR001228">
    <property type="entry name" value="IspD"/>
</dbReference>
<dbReference type="InterPro" id="IPR034683">
    <property type="entry name" value="IspD/TarI"/>
</dbReference>
<dbReference type="InterPro" id="IPR050088">
    <property type="entry name" value="IspD/TarI_cytidylyltransf_bact"/>
</dbReference>
<dbReference type="InterPro" id="IPR018294">
    <property type="entry name" value="ISPD_synthase_CS"/>
</dbReference>
<dbReference type="InterPro" id="IPR029044">
    <property type="entry name" value="Nucleotide-diphossugar_trans"/>
</dbReference>
<dbReference type="NCBIfam" id="TIGR00453">
    <property type="entry name" value="ispD"/>
    <property type="match status" value="1"/>
</dbReference>
<dbReference type="PANTHER" id="PTHR32125">
    <property type="entry name" value="2-C-METHYL-D-ERYTHRITOL 4-PHOSPHATE CYTIDYLYLTRANSFERASE, CHLOROPLASTIC"/>
    <property type="match status" value="1"/>
</dbReference>
<dbReference type="PANTHER" id="PTHR32125:SF4">
    <property type="entry name" value="2-C-METHYL-D-ERYTHRITOL 4-PHOSPHATE CYTIDYLYLTRANSFERASE, CHLOROPLASTIC"/>
    <property type="match status" value="1"/>
</dbReference>
<dbReference type="Pfam" id="PF01128">
    <property type="entry name" value="IspD"/>
    <property type="match status" value="1"/>
</dbReference>
<dbReference type="SUPFAM" id="SSF53448">
    <property type="entry name" value="Nucleotide-diphospho-sugar transferases"/>
    <property type="match status" value="1"/>
</dbReference>
<dbReference type="PROSITE" id="PS01295">
    <property type="entry name" value="ISPD"/>
    <property type="match status" value="1"/>
</dbReference>
<proteinExistence type="inferred from homology"/>